<proteinExistence type="evidence at transcript level"/>
<name>ECHP_DANRE</name>
<protein>
    <recommendedName>
        <fullName>Peroxisomal bifunctional enzyme</fullName>
        <shortName>PBE</shortName>
        <shortName>PBFE</shortName>
    </recommendedName>
    <alternativeName>
        <fullName>Multifunctional enzyme 1</fullName>
        <shortName>MFE1</shortName>
    </alternativeName>
    <domain>
        <recommendedName>
            <fullName>Enoyl-CoA hydratase/3,2-trans-enoyl-CoA isomerase</fullName>
            <ecNumber>4.2.1.17</ecNumber>
            <ecNumber>5.3.3.8</ecNumber>
        </recommendedName>
    </domain>
    <domain>
        <recommendedName>
            <fullName>3-hydroxyacyl-CoA dehydrogenase</fullName>
            <ecNumber>1.1.1.35</ecNumber>
        </recommendedName>
    </domain>
</protein>
<accession>Q6NYL3</accession>
<keyword id="KW-0276">Fatty acid metabolism</keyword>
<keyword id="KW-0413">Isomerase</keyword>
<keyword id="KW-0443">Lipid metabolism</keyword>
<keyword id="KW-0456">Lyase</keyword>
<keyword id="KW-0511">Multifunctional enzyme</keyword>
<keyword id="KW-0520">NAD</keyword>
<keyword id="KW-0560">Oxidoreductase</keyword>
<keyword id="KW-0576">Peroxisome</keyword>
<keyword id="KW-0597">Phosphoprotein</keyword>
<keyword id="KW-1185">Reference proteome</keyword>
<comment type="function">
    <text evidence="2 3 4">Peroxisomal trifunctional enzyme possessing 2-enoyl-CoA hydratase, 3-hydroxyacyl-CoA dehydrogenase, and delta 3, delta 2-enoyl-CoA isomerase activities. Catalyzes two of the four reactions of the long straight chain fatty acids peroxisomal beta-oxidation pathway (By similarity). Can also use branched-chain fatty acids such as 2-methyl-2E-butenoyl-CoA as a substrate, which is hydrated into (2S,3S)-3-hydroxy-2-methylbutanoyl-CoA (By similarity). Optimal isomerase for 2,5 double bonds into 3,5 form isomerization in a range of enoyl-CoA species. Also able to isomerize both 3-cis and 3-trans double bonds into the 2-trans form in a range of enoyl-CoA species (By similarity). Regulates the amount of medium-chain dicarboxylic fatty acids which are essential regulators of all fatty acid oxidation pathways (By similarity). Also involved in the degradation of long-chain dicarboxylic acids through peroxisomal beta-oxidation (By similarity).</text>
</comment>
<comment type="catalytic activity">
    <reaction evidence="3">
        <text>a (3S)-3-hydroxyacyl-CoA = a (2E)-enoyl-CoA + H2O</text>
        <dbReference type="Rhea" id="RHEA:16105"/>
        <dbReference type="ChEBI" id="CHEBI:15377"/>
        <dbReference type="ChEBI" id="CHEBI:57318"/>
        <dbReference type="ChEBI" id="CHEBI:58856"/>
        <dbReference type="EC" id="4.2.1.17"/>
    </reaction>
    <physiologicalReaction direction="left-to-right" evidence="3">
        <dbReference type="Rhea" id="RHEA:16106"/>
    </physiologicalReaction>
</comment>
<comment type="catalytic activity">
    <reaction evidence="2">
        <text>a 4-saturated-(3S)-3-hydroxyacyl-CoA = a (3E)-enoyl-CoA + H2O</text>
        <dbReference type="Rhea" id="RHEA:20724"/>
        <dbReference type="ChEBI" id="CHEBI:15377"/>
        <dbReference type="ChEBI" id="CHEBI:58521"/>
        <dbReference type="ChEBI" id="CHEBI:137480"/>
        <dbReference type="EC" id="4.2.1.17"/>
    </reaction>
    <physiologicalReaction direction="left-to-right" evidence="2">
        <dbReference type="Rhea" id="RHEA:20725"/>
    </physiologicalReaction>
</comment>
<comment type="catalytic activity">
    <reaction evidence="2">
        <text>a (3Z)-enoyl-CoA = a 4-saturated (2E)-enoyl-CoA</text>
        <dbReference type="Rhea" id="RHEA:45900"/>
        <dbReference type="ChEBI" id="CHEBI:85097"/>
        <dbReference type="ChEBI" id="CHEBI:85489"/>
        <dbReference type="EC" id="5.3.3.8"/>
    </reaction>
    <physiologicalReaction direction="left-to-right" evidence="2">
        <dbReference type="Rhea" id="RHEA:45901"/>
    </physiologicalReaction>
</comment>
<comment type="catalytic activity">
    <reaction evidence="2">
        <text>a (3E)-enoyl-CoA = a 4-saturated (2E)-enoyl-CoA</text>
        <dbReference type="Rhea" id="RHEA:45228"/>
        <dbReference type="ChEBI" id="CHEBI:58521"/>
        <dbReference type="ChEBI" id="CHEBI:85097"/>
        <dbReference type="EC" id="5.3.3.8"/>
    </reaction>
    <physiologicalReaction direction="left-to-right" evidence="2">
        <dbReference type="Rhea" id="RHEA:45229"/>
    </physiologicalReaction>
</comment>
<comment type="catalytic activity">
    <reaction evidence="3">
        <text>a (3S)-3-hydroxyacyl-CoA + NAD(+) = a 3-oxoacyl-CoA + NADH + H(+)</text>
        <dbReference type="Rhea" id="RHEA:22432"/>
        <dbReference type="ChEBI" id="CHEBI:15378"/>
        <dbReference type="ChEBI" id="CHEBI:57318"/>
        <dbReference type="ChEBI" id="CHEBI:57540"/>
        <dbReference type="ChEBI" id="CHEBI:57945"/>
        <dbReference type="ChEBI" id="CHEBI:90726"/>
        <dbReference type="EC" id="1.1.1.35"/>
    </reaction>
    <physiologicalReaction direction="left-to-right" evidence="3">
        <dbReference type="Rhea" id="RHEA:22433"/>
    </physiologicalReaction>
</comment>
<comment type="catalytic activity">
    <reaction evidence="2">
        <text>(2S,3S)-3-hydroxy-2-methylbutanoyl-CoA = (2E)-2-methylbut-2-enoyl-CoA + H2O</text>
        <dbReference type="Rhea" id="RHEA:31119"/>
        <dbReference type="ChEBI" id="CHEBI:15377"/>
        <dbReference type="ChEBI" id="CHEBI:57312"/>
        <dbReference type="ChEBI" id="CHEBI:57337"/>
    </reaction>
    <physiologicalReaction direction="right-to-left" evidence="2">
        <dbReference type="Rhea" id="RHEA:31121"/>
    </physiologicalReaction>
</comment>
<comment type="catalytic activity">
    <reaction evidence="3">
        <text>(3S)-hydroxyhexadecanoyl-CoA + NAD(+) = 3-oxohexadecanoyl-CoA + NADH + H(+)</text>
        <dbReference type="Rhea" id="RHEA:31159"/>
        <dbReference type="ChEBI" id="CHEBI:15378"/>
        <dbReference type="ChEBI" id="CHEBI:57349"/>
        <dbReference type="ChEBI" id="CHEBI:57540"/>
        <dbReference type="ChEBI" id="CHEBI:57945"/>
        <dbReference type="ChEBI" id="CHEBI:62613"/>
    </reaction>
    <physiologicalReaction direction="left-to-right" evidence="3">
        <dbReference type="Rhea" id="RHEA:31160"/>
    </physiologicalReaction>
</comment>
<comment type="catalytic activity">
    <reaction evidence="3">
        <text>(3S)-hydroxyhexadecanoyl-CoA = (2E)-hexadecenoyl-CoA + H2O</text>
        <dbReference type="Rhea" id="RHEA:31163"/>
        <dbReference type="ChEBI" id="CHEBI:15377"/>
        <dbReference type="ChEBI" id="CHEBI:61526"/>
        <dbReference type="ChEBI" id="CHEBI:62613"/>
    </reaction>
    <physiologicalReaction direction="right-to-left" evidence="3">
        <dbReference type="Rhea" id="RHEA:31165"/>
    </physiologicalReaction>
</comment>
<comment type="catalytic activity">
    <reaction evidence="3">
        <text>(2E)-hexadecenedioyl-CoA + H2O = (3S)-hydroxyhexadecanedioyl-CoA</text>
        <dbReference type="Rhea" id="RHEA:40259"/>
        <dbReference type="ChEBI" id="CHEBI:15377"/>
        <dbReference type="ChEBI" id="CHEBI:77075"/>
        <dbReference type="ChEBI" id="CHEBI:77080"/>
    </reaction>
    <physiologicalReaction direction="left-to-right" evidence="3">
        <dbReference type="Rhea" id="RHEA:40260"/>
    </physiologicalReaction>
</comment>
<comment type="catalytic activity">
    <reaction evidence="3">
        <text>(3S)-hydroxyhexadecanedioyl-CoA + NAD(+) = 3-oxohexadecanedioyl-CoA + NADH + H(+)</text>
        <dbReference type="Rhea" id="RHEA:40267"/>
        <dbReference type="ChEBI" id="CHEBI:15378"/>
        <dbReference type="ChEBI" id="CHEBI:57540"/>
        <dbReference type="ChEBI" id="CHEBI:57945"/>
        <dbReference type="ChEBI" id="CHEBI:77080"/>
        <dbReference type="ChEBI" id="CHEBI:77081"/>
    </reaction>
    <physiologicalReaction direction="left-to-right" evidence="3">
        <dbReference type="Rhea" id="RHEA:40268"/>
    </physiologicalReaction>
</comment>
<comment type="catalytic activity">
    <reaction evidence="2">
        <text>(3E,5Z)-tetradecadienoyl-CoA = (2E,5Z)-tetradecadienoyl-CoA</text>
        <dbReference type="Rhea" id="RHEA:47464"/>
        <dbReference type="ChEBI" id="CHEBI:71586"/>
        <dbReference type="ChEBI" id="CHEBI:87701"/>
    </reaction>
    <physiologicalReaction direction="right-to-left" evidence="2">
        <dbReference type="Rhea" id="RHEA:47466"/>
    </physiologicalReaction>
</comment>
<comment type="catalytic activity">
    <reaction evidence="2">
        <text>(3E,5Z)-octadienoyl-CoA = (2E,5Z)-octadienoyl-CoA</text>
        <dbReference type="Rhea" id="RHEA:49932"/>
        <dbReference type="ChEBI" id="CHEBI:85108"/>
        <dbReference type="ChEBI" id="CHEBI:131990"/>
    </reaction>
    <physiologicalReaction direction="right-to-left" evidence="2">
        <dbReference type="Rhea" id="RHEA:49934"/>
    </physiologicalReaction>
</comment>
<comment type="catalytic activity">
    <reaction evidence="2">
        <text>(3S)-hydroxydecanoyl-CoA + NAD(+) = 3-oxodecanoyl-CoA + NADH + H(+)</text>
        <dbReference type="Rhea" id="RHEA:31187"/>
        <dbReference type="ChEBI" id="CHEBI:15378"/>
        <dbReference type="ChEBI" id="CHEBI:57540"/>
        <dbReference type="ChEBI" id="CHEBI:57945"/>
        <dbReference type="ChEBI" id="CHEBI:62548"/>
        <dbReference type="ChEBI" id="CHEBI:62616"/>
    </reaction>
    <physiologicalReaction direction="left-to-right" evidence="2">
        <dbReference type="Rhea" id="RHEA:31188"/>
    </physiologicalReaction>
</comment>
<comment type="catalytic activity">
    <reaction evidence="2">
        <text>(3E)-decenoyl-CoA = (2E)-decenoyl-CoA</text>
        <dbReference type="Rhea" id="RHEA:45752"/>
        <dbReference type="ChEBI" id="CHEBI:61406"/>
        <dbReference type="ChEBI" id="CHEBI:84793"/>
    </reaction>
    <physiologicalReaction direction="left-to-right" evidence="2">
        <dbReference type="Rhea" id="RHEA:45753"/>
    </physiologicalReaction>
</comment>
<comment type="catalytic activity">
    <reaction evidence="2">
        <text>(3Z)-hexenoyl-CoA = (2E)-hexenoyl-CoA</text>
        <dbReference type="Rhea" id="RHEA:45748"/>
        <dbReference type="ChEBI" id="CHEBI:62077"/>
        <dbReference type="ChEBI" id="CHEBI:85415"/>
    </reaction>
    <physiologicalReaction direction="left-to-right" evidence="2">
        <dbReference type="Rhea" id="RHEA:45749"/>
    </physiologicalReaction>
</comment>
<comment type="catalytic activity">
    <reaction evidence="2">
        <text>(3E)-hexenoyl-CoA = (2E)-hexenoyl-CoA</text>
        <dbReference type="Rhea" id="RHEA:45736"/>
        <dbReference type="ChEBI" id="CHEBI:62077"/>
        <dbReference type="ChEBI" id="CHEBI:84790"/>
    </reaction>
    <physiologicalReaction direction="left-to-right" evidence="2">
        <dbReference type="Rhea" id="RHEA:45737"/>
    </physiologicalReaction>
</comment>
<comment type="catalytic activity">
    <reaction evidence="2">
        <text>(3S)-hydroxydecanoyl-CoA = (2E)-decenoyl-CoA + H2O</text>
        <dbReference type="Rhea" id="RHEA:31191"/>
        <dbReference type="ChEBI" id="CHEBI:15377"/>
        <dbReference type="ChEBI" id="CHEBI:61406"/>
        <dbReference type="ChEBI" id="CHEBI:62616"/>
    </reaction>
    <physiologicalReaction direction="right-to-left" evidence="2">
        <dbReference type="Rhea" id="RHEA:31193"/>
    </physiologicalReaction>
</comment>
<comment type="catalytic activity">
    <reaction evidence="2">
        <text>(3S)-hydroxyhexanoyl-CoA = (2E)-hexenoyl-CoA + H2O</text>
        <dbReference type="Rhea" id="RHEA:30547"/>
        <dbReference type="ChEBI" id="CHEBI:15377"/>
        <dbReference type="ChEBI" id="CHEBI:62075"/>
        <dbReference type="ChEBI" id="CHEBI:62077"/>
    </reaction>
    <physiologicalReaction direction="right-to-left" evidence="2">
        <dbReference type="Rhea" id="RHEA:30549"/>
    </physiologicalReaction>
</comment>
<comment type="pathway">
    <text evidence="3">Lipid metabolism; fatty acid beta-oxidation.</text>
</comment>
<comment type="subunit">
    <text evidence="2">Monomer.</text>
</comment>
<comment type="subcellular location">
    <subcellularLocation>
        <location evidence="3">Peroxisome</location>
    </subcellularLocation>
</comment>
<comment type="similarity">
    <text evidence="5">In the N-terminal section; belongs to the enoyl-CoA hydratase/isomerase family.</text>
</comment>
<comment type="similarity">
    <text evidence="5">In the C-terminal section; belongs to the 3-hydroxyacyl-CoA dehydrogenase family.</text>
</comment>
<evidence type="ECO:0000250" key="1"/>
<evidence type="ECO:0000250" key="2">
    <source>
        <dbReference type="UniProtKB" id="P07896"/>
    </source>
</evidence>
<evidence type="ECO:0000250" key="3">
    <source>
        <dbReference type="UniProtKB" id="Q08426"/>
    </source>
</evidence>
<evidence type="ECO:0000250" key="4">
    <source>
        <dbReference type="UniProtKB" id="Q9DBM2"/>
    </source>
</evidence>
<evidence type="ECO:0000305" key="5"/>
<gene>
    <name type="primary">ehhadh</name>
    <name type="synonym">echd</name>
    <name type="ORF">si:dkeyp-30d5.2</name>
    <name type="ORF">zgc:77526</name>
</gene>
<feature type="initiator methionine" description="Removed" evidence="1">
    <location>
        <position position="1"/>
    </location>
</feature>
<feature type="chain" id="PRO_0000353182" description="Peroxisomal bifunctional enzyme">
    <location>
        <begin position="2"/>
        <end position="718"/>
    </location>
</feature>
<feature type="region of interest" description="Enoyl-CoA hydratase / isomerase">
    <location>
        <begin position="2"/>
        <end position="280"/>
    </location>
</feature>
<feature type="region of interest" description="3-hydroxyacyl-CoA dehydrogenase">
    <location>
        <begin position="281"/>
        <end position="567"/>
    </location>
</feature>
<feature type="short sequence motif" description="Microbody targeting signal" evidence="1">
    <location>
        <begin position="716"/>
        <end position="718"/>
    </location>
</feature>
<feature type="binding site" evidence="1">
    <location>
        <position position="100"/>
    </location>
    <ligand>
        <name>substrate</name>
    </ligand>
</feature>
<feature type="site" description="Important for catalytic activity" evidence="1">
    <location>
        <position position="123"/>
    </location>
</feature>
<organism>
    <name type="scientific">Danio rerio</name>
    <name type="common">Zebrafish</name>
    <name type="synonym">Brachydanio rerio</name>
    <dbReference type="NCBI Taxonomy" id="7955"/>
    <lineage>
        <taxon>Eukaryota</taxon>
        <taxon>Metazoa</taxon>
        <taxon>Chordata</taxon>
        <taxon>Craniata</taxon>
        <taxon>Vertebrata</taxon>
        <taxon>Euteleostomi</taxon>
        <taxon>Actinopterygii</taxon>
        <taxon>Neopterygii</taxon>
        <taxon>Teleostei</taxon>
        <taxon>Ostariophysi</taxon>
        <taxon>Cypriniformes</taxon>
        <taxon>Danionidae</taxon>
        <taxon>Danioninae</taxon>
        <taxon>Danio</taxon>
    </lineage>
</organism>
<dbReference type="EC" id="4.2.1.17"/>
<dbReference type="EC" id="5.3.3.8"/>
<dbReference type="EC" id="1.1.1.35"/>
<dbReference type="EMBL" id="CR936497">
    <property type="protein sequence ID" value="CAP19438.1"/>
    <property type="molecule type" value="Genomic_DNA"/>
</dbReference>
<dbReference type="EMBL" id="BC066545">
    <property type="protein sequence ID" value="AAH66545.1"/>
    <property type="molecule type" value="mRNA"/>
</dbReference>
<dbReference type="RefSeq" id="NP_996951.1">
    <property type="nucleotide sequence ID" value="NM_207068.1"/>
</dbReference>
<dbReference type="SMR" id="Q6NYL3"/>
<dbReference type="FunCoup" id="Q6NYL3">
    <property type="interactions" value="612"/>
</dbReference>
<dbReference type="STRING" id="7955.ENSDARP00000093211"/>
<dbReference type="PaxDb" id="7955-ENSDARP00000093211"/>
<dbReference type="Ensembl" id="ENSDART00000102434">
    <property type="protein sequence ID" value="ENSDARP00000093211"/>
    <property type="gene ID" value="ENSDARG00000070029"/>
</dbReference>
<dbReference type="GeneID" id="100000859"/>
<dbReference type="KEGG" id="dre:100000859"/>
<dbReference type="AGR" id="ZFIN:ZDB-GENE-040426-2581"/>
<dbReference type="CTD" id="1962"/>
<dbReference type="ZFIN" id="ZDB-GENE-040426-2581">
    <property type="gene designation" value="ehhadh"/>
</dbReference>
<dbReference type="eggNOG" id="KOG1683">
    <property type="taxonomic scope" value="Eukaryota"/>
</dbReference>
<dbReference type="HOGENOM" id="CLU_009834_16_3_1"/>
<dbReference type="InParanoid" id="Q6NYL3"/>
<dbReference type="OMA" id="YNGAAMG"/>
<dbReference type="OrthoDB" id="2018133at2759"/>
<dbReference type="PhylomeDB" id="Q6NYL3"/>
<dbReference type="TreeFam" id="TF316708"/>
<dbReference type="Reactome" id="R-DRE-390247">
    <property type="pathway name" value="Beta-oxidation of very long chain fatty acids"/>
</dbReference>
<dbReference type="UniPathway" id="UPA00659"/>
<dbReference type="PRO" id="PR:Q6NYL3"/>
<dbReference type="Proteomes" id="UP000000437">
    <property type="component" value="Chromosome 9"/>
</dbReference>
<dbReference type="Bgee" id="ENSDARG00000070029">
    <property type="expression patterns" value="Expressed in liver and 27 other cell types or tissues"/>
</dbReference>
<dbReference type="GO" id="GO:0005777">
    <property type="term" value="C:peroxisome"/>
    <property type="evidence" value="ECO:0000250"/>
    <property type="project" value="UniProtKB"/>
</dbReference>
<dbReference type="GO" id="GO:0003857">
    <property type="term" value="F:3-hydroxyacyl-CoA dehydrogenase activity"/>
    <property type="evidence" value="ECO:0000250"/>
    <property type="project" value="UniProtKB"/>
</dbReference>
<dbReference type="GO" id="GO:0004165">
    <property type="term" value="F:delta(3)-delta(2)-enoyl-CoA isomerase activity"/>
    <property type="evidence" value="ECO:0000250"/>
    <property type="project" value="UniProtKB"/>
</dbReference>
<dbReference type="GO" id="GO:0004300">
    <property type="term" value="F:enoyl-CoA hydratase activity"/>
    <property type="evidence" value="ECO:0000250"/>
    <property type="project" value="UniProtKB"/>
</dbReference>
<dbReference type="GO" id="GO:0016863">
    <property type="term" value="F:intramolecular oxidoreductase activity, transposing C=C bonds"/>
    <property type="evidence" value="ECO:0000250"/>
    <property type="project" value="UniProtKB"/>
</dbReference>
<dbReference type="GO" id="GO:0016509">
    <property type="term" value="F:long-chain-3-hydroxyacyl-CoA dehydrogenase activity"/>
    <property type="evidence" value="ECO:0000250"/>
    <property type="project" value="UniProtKB"/>
</dbReference>
<dbReference type="GO" id="GO:0070403">
    <property type="term" value="F:NAD+ binding"/>
    <property type="evidence" value="ECO:0007669"/>
    <property type="project" value="InterPro"/>
</dbReference>
<dbReference type="GO" id="GO:0006635">
    <property type="term" value="P:fatty acid beta-oxidation"/>
    <property type="evidence" value="ECO:0000250"/>
    <property type="project" value="UniProtKB"/>
</dbReference>
<dbReference type="CDD" id="cd06558">
    <property type="entry name" value="crotonase-like"/>
    <property type="match status" value="1"/>
</dbReference>
<dbReference type="FunFam" id="3.40.50.720:FF:000009">
    <property type="entry name" value="Fatty oxidation complex, alpha subunit"/>
    <property type="match status" value="1"/>
</dbReference>
<dbReference type="FunFam" id="1.10.1040.50:FF:000006">
    <property type="entry name" value="Peroxisomal bifunctional enzyme"/>
    <property type="match status" value="1"/>
</dbReference>
<dbReference type="FunFam" id="3.90.226.10:FF:000052">
    <property type="entry name" value="Peroxisomal bifunctional enzyme"/>
    <property type="match status" value="1"/>
</dbReference>
<dbReference type="Gene3D" id="1.10.1040.50">
    <property type="match status" value="1"/>
</dbReference>
<dbReference type="Gene3D" id="3.90.226.10">
    <property type="entry name" value="2-enoyl-CoA Hydratase, Chain A, domain 1"/>
    <property type="match status" value="1"/>
</dbReference>
<dbReference type="Gene3D" id="3.40.50.720">
    <property type="entry name" value="NAD(P)-binding Rossmann-like Domain"/>
    <property type="match status" value="1"/>
</dbReference>
<dbReference type="InterPro" id="IPR006180">
    <property type="entry name" value="3-OHacyl-CoA_DH_CS"/>
</dbReference>
<dbReference type="InterPro" id="IPR006176">
    <property type="entry name" value="3-OHacyl-CoA_DH_NAD-bd"/>
</dbReference>
<dbReference type="InterPro" id="IPR006108">
    <property type="entry name" value="3HC_DH_C"/>
</dbReference>
<dbReference type="InterPro" id="IPR008927">
    <property type="entry name" value="6-PGluconate_DH-like_C_sf"/>
</dbReference>
<dbReference type="InterPro" id="IPR029045">
    <property type="entry name" value="ClpP/crotonase-like_dom_sf"/>
</dbReference>
<dbReference type="InterPro" id="IPR018376">
    <property type="entry name" value="Enoyl-CoA_hyd/isom_CS"/>
</dbReference>
<dbReference type="InterPro" id="IPR001753">
    <property type="entry name" value="Enoyl-CoA_hydra/iso"/>
</dbReference>
<dbReference type="InterPro" id="IPR036291">
    <property type="entry name" value="NAD(P)-bd_dom_sf"/>
</dbReference>
<dbReference type="PANTHER" id="PTHR23309">
    <property type="entry name" value="3-HYDROXYACYL-COA DEHYROGENASE"/>
    <property type="match status" value="1"/>
</dbReference>
<dbReference type="PANTHER" id="PTHR23309:SF49">
    <property type="entry name" value="PEROXISOMAL BIFUNCTIONAL ENZYME"/>
    <property type="match status" value="1"/>
</dbReference>
<dbReference type="Pfam" id="PF00725">
    <property type="entry name" value="3HCDH"/>
    <property type="match status" value="2"/>
</dbReference>
<dbReference type="Pfam" id="PF02737">
    <property type="entry name" value="3HCDH_N"/>
    <property type="match status" value="1"/>
</dbReference>
<dbReference type="Pfam" id="PF00378">
    <property type="entry name" value="ECH_1"/>
    <property type="match status" value="1"/>
</dbReference>
<dbReference type="SUPFAM" id="SSF48179">
    <property type="entry name" value="6-phosphogluconate dehydrogenase C-terminal domain-like"/>
    <property type="match status" value="2"/>
</dbReference>
<dbReference type="SUPFAM" id="SSF52096">
    <property type="entry name" value="ClpP/crotonase"/>
    <property type="match status" value="1"/>
</dbReference>
<dbReference type="SUPFAM" id="SSF51735">
    <property type="entry name" value="NAD(P)-binding Rossmann-fold domains"/>
    <property type="match status" value="1"/>
</dbReference>
<dbReference type="PROSITE" id="PS00067">
    <property type="entry name" value="3HCDH"/>
    <property type="match status" value="1"/>
</dbReference>
<dbReference type="PROSITE" id="PS00166">
    <property type="entry name" value="ENOYL_COA_HYDRATASE"/>
    <property type="match status" value="1"/>
</dbReference>
<reference key="1">
    <citation type="journal article" date="2013" name="Nature">
        <title>The zebrafish reference genome sequence and its relationship to the human genome.</title>
        <authorList>
            <person name="Howe K."/>
            <person name="Clark M.D."/>
            <person name="Torroja C.F."/>
            <person name="Torrance J."/>
            <person name="Berthelot C."/>
            <person name="Muffato M."/>
            <person name="Collins J.E."/>
            <person name="Humphray S."/>
            <person name="McLaren K."/>
            <person name="Matthews L."/>
            <person name="McLaren S."/>
            <person name="Sealy I."/>
            <person name="Caccamo M."/>
            <person name="Churcher C."/>
            <person name="Scott C."/>
            <person name="Barrett J.C."/>
            <person name="Koch R."/>
            <person name="Rauch G.J."/>
            <person name="White S."/>
            <person name="Chow W."/>
            <person name="Kilian B."/>
            <person name="Quintais L.T."/>
            <person name="Guerra-Assuncao J.A."/>
            <person name="Zhou Y."/>
            <person name="Gu Y."/>
            <person name="Yen J."/>
            <person name="Vogel J.H."/>
            <person name="Eyre T."/>
            <person name="Redmond S."/>
            <person name="Banerjee R."/>
            <person name="Chi J."/>
            <person name="Fu B."/>
            <person name="Langley E."/>
            <person name="Maguire S.F."/>
            <person name="Laird G.K."/>
            <person name="Lloyd D."/>
            <person name="Kenyon E."/>
            <person name="Donaldson S."/>
            <person name="Sehra H."/>
            <person name="Almeida-King J."/>
            <person name="Loveland J."/>
            <person name="Trevanion S."/>
            <person name="Jones M."/>
            <person name="Quail M."/>
            <person name="Willey D."/>
            <person name="Hunt A."/>
            <person name="Burton J."/>
            <person name="Sims S."/>
            <person name="McLay K."/>
            <person name="Plumb B."/>
            <person name="Davis J."/>
            <person name="Clee C."/>
            <person name="Oliver K."/>
            <person name="Clark R."/>
            <person name="Riddle C."/>
            <person name="Elliot D."/>
            <person name="Threadgold G."/>
            <person name="Harden G."/>
            <person name="Ware D."/>
            <person name="Begum S."/>
            <person name="Mortimore B."/>
            <person name="Kerry G."/>
            <person name="Heath P."/>
            <person name="Phillimore B."/>
            <person name="Tracey A."/>
            <person name="Corby N."/>
            <person name="Dunn M."/>
            <person name="Johnson C."/>
            <person name="Wood J."/>
            <person name="Clark S."/>
            <person name="Pelan S."/>
            <person name="Griffiths G."/>
            <person name="Smith M."/>
            <person name="Glithero R."/>
            <person name="Howden P."/>
            <person name="Barker N."/>
            <person name="Lloyd C."/>
            <person name="Stevens C."/>
            <person name="Harley J."/>
            <person name="Holt K."/>
            <person name="Panagiotidis G."/>
            <person name="Lovell J."/>
            <person name="Beasley H."/>
            <person name="Henderson C."/>
            <person name="Gordon D."/>
            <person name="Auger K."/>
            <person name="Wright D."/>
            <person name="Collins J."/>
            <person name="Raisen C."/>
            <person name="Dyer L."/>
            <person name="Leung K."/>
            <person name="Robertson L."/>
            <person name="Ambridge K."/>
            <person name="Leongamornlert D."/>
            <person name="McGuire S."/>
            <person name="Gilderthorp R."/>
            <person name="Griffiths C."/>
            <person name="Manthravadi D."/>
            <person name="Nichol S."/>
            <person name="Barker G."/>
            <person name="Whitehead S."/>
            <person name="Kay M."/>
            <person name="Brown J."/>
            <person name="Murnane C."/>
            <person name="Gray E."/>
            <person name="Humphries M."/>
            <person name="Sycamore N."/>
            <person name="Barker D."/>
            <person name="Saunders D."/>
            <person name="Wallis J."/>
            <person name="Babbage A."/>
            <person name="Hammond S."/>
            <person name="Mashreghi-Mohammadi M."/>
            <person name="Barr L."/>
            <person name="Martin S."/>
            <person name="Wray P."/>
            <person name="Ellington A."/>
            <person name="Matthews N."/>
            <person name="Ellwood M."/>
            <person name="Woodmansey R."/>
            <person name="Clark G."/>
            <person name="Cooper J."/>
            <person name="Tromans A."/>
            <person name="Grafham D."/>
            <person name="Skuce C."/>
            <person name="Pandian R."/>
            <person name="Andrews R."/>
            <person name="Harrison E."/>
            <person name="Kimberley A."/>
            <person name="Garnett J."/>
            <person name="Fosker N."/>
            <person name="Hall R."/>
            <person name="Garner P."/>
            <person name="Kelly D."/>
            <person name="Bird C."/>
            <person name="Palmer S."/>
            <person name="Gehring I."/>
            <person name="Berger A."/>
            <person name="Dooley C.M."/>
            <person name="Ersan-Urun Z."/>
            <person name="Eser C."/>
            <person name="Geiger H."/>
            <person name="Geisler M."/>
            <person name="Karotki L."/>
            <person name="Kirn A."/>
            <person name="Konantz J."/>
            <person name="Konantz M."/>
            <person name="Oberlander M."/>
            <person name="Rudolph-Geiger S."/>
            <person name="Teucke M."/>
            <person name="Lanz C."/>
            <person name="Raddatz G."/>
            <person name="Osoegawa K."/>
            <person name="Zhu B."/>
            <person name="Rapp A."/>
            <person name="Widaa S."/>
            <person name="Langford C."/>
            <person name="Yang F."/>
            <person name="Schuster S.C."/>
            <person name="Carter N.P."/>
            <person name="Harrow J."/>
            <person name="Ning Z."/>
            <person name="Herrero J."/>
            <person name="Searle S.M."/>
            <person name="Enright A."/>
            <person name="Geisler R."/>
            <person name="Plasterk R.H."/>
            <person name="Lee C."/>
            <person name="Westerfield M."/>
            <person name="de Jong P.J."/>
            <person name="Zon L.I."/>
            <person name="Postlethwait J.H."/>
            <person name="Nusslein-Volhard C."/>
            <person name="Hubbard T.J."/>
            <person name="Roest Crollius H."/>
            <person name="Rogers J."/>
            <person name="Stemple D.L."/>
        </authorList>
    </citation>
    <scope>NUCLEOTIDE SEQUENCE [LARGE SCALE GENOMIC DNA]</scope>
    <source>
        <strain>Tuebingen</strain>
    </source>
</reference>
<reference key="2">
    <citation type="submission" date="2004-02" db="EMBL/GenBank/DDBJ databases">
        <authorList>
            <consortium name="NIH - Zebrafish Gene Collection (ZGC) project"/>
        </authorList>
    </citation>
    <scope>NUCLEOTIDE SEQUENCE [LARGE SCALE MRNA]</scope>
    <source>
        <tissue>Kidney</tissue>
    </source>
</reference>
<sequence length="718" mass="78508">MARYELVKRSVALITLTNPPVNALSSAVRHAISKTMERALSDPKVTAVVICGENGRFCGGADIREFAGPLRGPPLVPLLDAIEAGEKPVVAAIEGVALGGGFELALVCHYRIAHYKARLGLPEVTLGILPAAGGTQRLPRLIGIPAALELITTGRHVSAQEALKLGMVDQVTEQNTCEVALEFALKAVGKPLSSRRLSMLTTPCPPGLDGIFEAATMQVQKKARGVMAPLACVQAVRAATLPYSEGIKREGELMATLFSSGQAQALQYSFFAQRTAEKWTLPSGAQWNNSKPREIQSAAVIGLGTMGRGIVVSLARVGISVIAVESEKKLLETGRQMVIGMLERDAKRRGVSASLNLLKFSLSLQDLKDVDLVIEAVFEDMALKKQIFRELSRVCRPATLLCSNTSGLDVDALADVTDRPQLVAGMHFFSPAHVMKLLEVVCGPRSSKEAIATAMSLGKRMGKVSVAVGNCPGFVGNRMLMPYLEQATFLLEEGATPQQIDKALEDFGFAMGVFRMSDLAGLDVGWRVRKESGLTGPDVDPKDPPRRRQGRKYCPIPDMVCQQGRFGQKTGRGWYMYDKPGDTNAKPDPLIQNLLETYRSRYGIQPRKITDQEIIERCLFALANEGFRILKDKIAGQPEDIDVIYLFGYGFPRHRGGPMFYASMVGLERVLERLEYYHHALPDVPHLEPSPLLKKLVARGSPPIQKWREHIKSMHSHL</sequence>